<evidence type="ECO:0000255" key="1">
    <source>
        <dbReference type="HAMAP-Rule" id="MF_01903"/>
    </source>
</evidence>
<dbReference type="EC" id="2.4.2.-" evidence="1"/>
<dbReference type="EC" id="2.4.2.22" evidence="1"/>
<dbReference type="EMBL" id="AM286415">
    <property type="protein sequence ID" value="CAL13237.1"/>
    <property type="molecule type" value="Genomic_DNA"/>
</dbReference>
<dbReference type="RefSeq" id="WP_005167529.1">
    <property type="nucleotide sequence ID" value="NC_008800.1"/>
</dbReference>
<dbReference type="RefSeq" id="YP_001007381.1">
    <property type="nucleotide sequence ID" value="NC_008800.1"/>
</dbReference>
<dbReference type="SMR" id="A1JNY0"/>
<dbReference type="KEGG" id="yen:YE3205"/>
<dbReference type="PATRIC" id="fig|393305.7.peg.3408"/>
<dbReference type="eggNOG" id="COG2236">
    <property type="taxonomic scope" value="Bacteria"/>
</dbReference>
<dbReference type="HOGENOM" id="CLU_080904_3_0_6"/>
<dbReference type="OrthoDB" id="9789690at2"/>
<dbReference type="UniPathway" id="UPA00602">
    <property type="reaction ID" value="UER00658"/>
</dbReference>
<dbReference type="UniPathway" id="UPA00909">
    <property type="reaction ID" value="UER00887"/>
</dbReference>
<dbReference type="Proteomes" id="UP000000642">
    <property type="component" value="Chromosome"/>
</dbReference>
<dbReference type="GO" id="GO:0005829">
    <property type="term" value="C:cytosol"/>
    <property type="evidence" value="ECO:0007669"/>
    <property type="project" value="TreeGrafter"/>
</dbReference>
<dbReference type="GO" id="GO:0005886">
    <property type="term" value="C:plasma membrane"/>
    <property type="evidence" value="ECO:0007669"/>
    <property type="project" value="UniProtKB-SubCell"/>
</dbReference>
<dbReference type="GO" id="GO:0052657">
    <property type="term" value="F:guanine phosphoribosyltransferase activity"/>
    <property type="evidence" value="ECO:0007669"/>
    <property type="project" value="RHEA"/>
</dbReference>
<dbReference type="GO" id="GO:0004422">
    <property type="term" value="F:hypoxanthine phosphoribosyltransferase activity"/>
    <property type="evidence" value="ECO:0007669"/>
    <property type="project" value="TreeGrafter"/>
</dbReference>
<dbReference type="GO" id="GO:0000287">
    <property type="term" value="F:magnesium ion binding"/>
    <property type="evidence" value="ECO:0007669"/>
    <property type="project" value="UniProtKB-UniRule"/>
</dbReference>
<dbReference type="GO" id="GO:0000310">
    <property type="term" value="F:xanthine phosphoribosyltransferase activity"/>
    <property type="evidence" value="ECO:0007669"/>
    <property type="project" value="UniProtKB-UniRule"/>
</dbReference>
<dbReference type="GO" id="GO:0032263">
    <property type="term" value="P:GMP salvage"/>
    <property type="evidence" value="ECO:0007669"/>
    <property type="project" value="UniProtKB-UniRule"/>
</dbReference>
<dbReference type="GO" id="GO:0032264">
    <property type="term" value="P:IMP salvage"/>
    <property type="evidence" value="ECO:0007669"/>
    <property type="project" value="TreeGrafter"/>
</dbReference>
<dbReference type="GO" id="GO:0006166">
    <property type="term" value="P:purine ribonucleoside salvage"/>
    <property type="evidence" value="ECO:0007669"/>
    <property type="project" value="UniProtKB-KW"/>
</dbReference>
<dbReference type="GO" id="GO:0032265">
    <property type="term" value="P:XMP salvage"/>
    <property type="evidence" value="ECO:0007669"/>
    <property type="project" value="UniProtKB-UniRule"/>
</dbReference>
<dbReference type="CDD" id="cd06223">
    <property type="entry name" value="PRTases_typeI"/>
    <property type="match status" value="1"/>
</dbReference>
<dbReference type="FunFam" id="3.40.50.2020:FF:000009">
    <property type="entry name" value="Xanthine phosphoribosyltransferase"/>
    <property type="match status" value="1"/>
</dbReference>
<dbReference type="Gene3D" id="3.40.50.2020">
    <property type="match status" value="1"/>
</dbReference>
<dbReference type="HAMAP" id="MF_01903">
    <property type="entry name" value="XGPRT"/>
    <property type="match status" value="1"/>
</dbReference>
<dbReference type="InterPro" id="IPR000836">
    <property type="entry name" value="PRibTrfase_dom"/>
</dbReference>
<dbReference type="InterPro" id="IPR029057">
    <property type="entry name" value="PRTase-like"/>
</dbReference>
<dbReference type="InterPro" id="IPR023747">
    <property type="entry name" value="Xanthine_Guanine_PRibTrfase"/>
</dbReference>
<dbReference type="NCBIfam" id="NF006613">
    <property type="entry name" value="PRK09177.1"/>
    <property type="match status" value="1"/>
</dbReference>
<dbReference type="PANTHER" id="PTHR39563">
    <property type="entry name" value="XANTHINE PHOSPHORIBOSYLTRANSFERASE"/>
    <property type="match status" value="1"/>
</dbReference>
<dbReference type="PANTHER" id="PTHR39563:SF1">
    <property type="entry name" value="XANTHINE-GUANINE PHOSPHORIBOSYLTRANSFERASE"/>
    <property type="match status" value="1"/>
</dbReference>
<dbReference type="Pfam" id="PF00156">
    <property type="entry name" value="Pribosyltran"/>
    <property type="match status" value="1"/>
</dbReference>
<dbReference type="SUPFAM" id="SSF53271">
    <property type="entry name" value="PRTase-like"/>
    <property type="match status" value="1"/>
</dbReference>
<dbReference type="PROSITE" id="PS00103">
    <property type="entry name" value="PUR_PYR_PR_TRANSFER"/>
    <property type="match status" value="1"/>
</dbReference>
<gene>
    <name evidence="1" type="primary">gpt</name>
    <name type="ordered locus">YE3205</name>
</gene>
<protein>
    <recommendedName>
        <fullName evidence="1">Xanthine-guanine phosphoribosyltransferase</fullName>
        <shortName evidence="1">XGPRT</shortName>
        <ecNumber evidence="1">2.4.2.-</ecNumber>
        <ecNumber evidence="1">2.4.2.22</ecNumber>
    </recommendedName>
    <alternativeName>
        <fullName evidence="1">Xanthine phosphoribosyltransferase</fullName>
    </alternativeName>
</protein>
<reference key="1">
    <citation type="journal article" date="2006" name="PLoS Genet.">
        <title>The complete genome sequence and comparative genome analysis of the high pathogenicity Yersinia enterocolitica strain 8081.</title>
        <authorList>
            <person name="Thomson N.R."/>
            <person name="Howard S."/>
            <person name="Wren B.W."/>
            <person name="Holden M.T.G."/>
            <person name="Crossman L."/>
            <person name="Challis G.L."/>
            <person name="Churcher C."/>
            <person name="Mungall K."/>
            <person name="Brooks K."/>
            <person name="Chillingworth T."/>
            <person name="Feltwell T."/>
            <person name="Abdellah Z."/>
            <person name="Hauser H."/>
            <person name="Jagels K."/>
            <person name="Maddison M."/>
            <person name="Moule S."/>
            <person name="Sanders M."/>
            <person name="Whitehead S."/>
            <person name="Quail M.A."/>
            <person name="Dougan G."/>
            <person name="Parkhill J."/>
            <person name="Prentice M.B."/>
        </authorList>
    </citation>
    <scope>NUCLEOTIDE SEQUENCE [LARGE SCALE GENOMIC DNA]</scope>
    <source>
        <strain>NCTC 13174 / 8081</strain>
    </source>
</reference>
<name>XGPT_YERE8</name>
<proteinExistence type="inferred from homology"/>
<comment type="function">
    <text evidence="1">Purine salvage pathway enzyme that catalyzes the transfer of the ribosyl-5-phosphate group from 5-phospho-alpha-D-ribose 1-diphosphate (PRPP) to the N9 position of the 6-oxopurines guanine and xanthine to form the corresponding ribonucleotides GMP (guanosine 5'-monophosphate) and XMP (xanthosine 5'-monophosphate), with the release of PPi. To a lesser extent, also acts on hypoxanthine.</text>
</comment>
<comment type="catalytic activity">
    <reaction evidence="1">
        <text>GMP + diphosphate = guanine + 5-phospho-alpha-D-ribose 1-diphosphate</text>
        <dbReference type="Rhea" id="RHEA:25424"/>
        <dbReference type="ChEBI" id="CHEBI:16235"/>
        <dbReference type="ChEBI" id="CHEBI:33019"/>
        <dbReference type="ChEBI" id="CHEBI:58017"/>
        <dbReference type="ChEBI" id="CHEBI:58115"/>
    </reaction>
    <physiologicalReaction direction="right-to-left" evidence="1">
        <dbReference type="Rhea" id="RHEA:25426"/>
    </physiologicalReaction>
</comment>
<comment type="catalytic activity">
    <reaction evidence="1">
        <text>XMP + diphosphate = xanthine + 5-phospho-alpha-D-ribose 1-diphosphate</text>
        <dbReference type="Rhea" id="RHEA:10800"/>
        <dbReference type="ChEBI" id="CHEBI:17712"/>
        <dbReference type="ChEBI" id="CHEBI:33019"/>
        <dbReference type="ChEBI" id="CHEBI:57464"/>
        <dbReference type="ChEBI" id="CHEBI:58017"/>
        <dbReference type="EC" id="2.4.2.22"/>
    </reaction>
    <physiologicalReaction direction="right-to-left" evidence="1">
        <dbReference type="Rhea" id="RHEA:10802"/>
    </physiologicalReaction>
</comment>
<comment type="catalytic activity">
    <reaction evidence="1">
        <text>IMP + diphosphate = hypoxanthine + 5-phospho-alpha-D-ribose 1-diphosphate</text>
        <dbReference type="Rhea" id="RHEA:17973"/>
        <dbReference type="ChEBI" id="CHEBI:17368"/>
        <dbReference type="ChEBI" id="CHEBI:33019"/>
        <dbReference type="ChEBI" id="CHEBI:58017"/>
        <dbReference type="ChEBI" id="CHEBI:58053"/>
    </reaction>
    <physiologicalReaction direction="right-to-left" evidence="1">
        <dbReference type="Rhea" id="RHEA:17975"/>
    </physiologicalReaction>
</comment>
<comment type="cofactor">
    <cofactor evidence="1">
        <name>Mg(2+)</name>
        <dbReference type="ChEBI" id="CHEBI:18420"/>
    </cofactor>
</comment>
<comment type="pathway">
    <text evidence="1">Purine metabolism; GMP biosynthesis via salvage pathway; GMP from guanine: step 1/1.</text>
</comment>
<comment type="pathway">
    <text evidence="1">Purine metabolism; XMP biosynthesis via salvage pathway; XMP from xanthine: step 1/1.</text>
</comment>
<comment type="subunit">
    <text evidence="1">Homotetramer.</text>
</comment>
<comment type="subcellular location">
    <subcellularLocation>
        <location evidence="1">Cell inner membrane</location>
        <topology evidence="1">Peripheral membrane protein</topology>
    </subcellularLocation>
</comment>
<comment type="similarity">
    <text evidence="1">Belongs to the purine/pyrimidine phosphoribosyltransferase family. XGPT subfamily.</text>
</comment>
<keyword id="KW-0997">Cell inner membrane</keyword>
<keyword id="KW-1003">Cell membrane</keyword>
<keyword id="KW-0328">Glycosyltransferase</keyword>
<keyword id="KW-0460">Magnesium</keyword>
<keyword id="KW-0472">Membrane</keyword>
<keyword id="KW-0479">Metal-binding</keyword>
<keyword id="KW-0660">Purine salvage</keyword>
<keyword id="KW-0808">Transferase</keyword>
<accession>A1JNY0</accession>
<organism>
    <name type="scientific">Yersinia enterocolitica serotype O:8 / biotype 1B (strain NCTC 13174 / 8081)</name>
    <dbReference type="NCBI Taxonomy" id="393305"/>
    <lineage>
        <taxon>Bacteria</taxon>
        <taxon>Pseudomonadati</taxon>
        <taxon>Pseudomonadota</taxon>
        <taxon>Gammaproteobacteria</taxon>
        <taxon>Enterobacterales</taxon>
        <taxon>Yersiniaceae</taxon>
        <taxon>Yersinia</taxon>
    </lineage>
</organism>
<sequence length="152" mass="16795">MSEKYVVTWDMLQIHARKLASRLLPADQWKGIIAVSRGGLVPAGILARELGIRYVDTVCIASYNHDNQGELKVLKRAEGDGEGFIVIDDLVDTGGTAKAIREMYPKAHFVTIFAKPAGRPLVDDYEVDIPQGTWIEQPWDMAVTFVAPLSAK</sequence>
<feature type="chain" id="PRO_1000070618" description="Xanthine-guanine phosphoribosyltransferase">
    <location>
        <begin position="1"/>
        <end position="152"/>
    </location>
</feature>
<feature type="binding site" evidence="1">
    <location>
        <begin position="37"/>
        <end position="38"/>
    </location>
    <ligand>
        <name>5-phospho-alpha-D-ribose 1-diphosphate</name>
        <dbReference type="ChEBI" id="CHEBI:58017"/>
    </ligand>
</feature>
<feature type="binding site" evidence="1">
    <location>
        <begin position="88"/>
        <end position="96"/>
    </location>
    <ligand>
        <name>5-phospho-alpha-D-ribose 1-diphosphate</name>
        <dbReference type="ChEBI" id="CHEBI:58017"/>
    </ligand>
</feature>
<feature type="binding site" evidence="1">
    <location>
        <position position="89"/>
    </location>
    <ligand>
        <name>Mg(2+)</name>
        <dbReference type="ChEBI" id="CHEBI:18420"/>
    </ligand>
</feature>
<feature type="binding site" evidence="1">
    <location>
        <begin position="92"/>
        <end position="96"/>
    </location>
    <ligand>
        <name>GMP</name>
        <dbReference type="ChEBI" id="CHEBI:58115"/>
    </ligand>
</feature>
<feature type="binding site" evidence="1">
    <location>
        <position position="92"/>
    </location>
    <ligand>
        <name>guanine</name>
        <dbReference type="ChEBI" id="CHEBI:16235"/>
    </ligand>
</feature>
<feature type="binding site" evidence="1">
    <location>
        <position position="92"/>
    </location>
    <ligand>
        <name>xanthine</name>
        <dbReference type="ChEBI" id="CHEBI:17712"/>
    </ligand>
</feature>
<feature type="binding site" evidence="1">
    <location>
        <begin position="134"/>
        <end position="135"/>
    </location>
    <ligand>
        <name>GMP</name>
        <dbReference type="ChEBI" id="CHEBI:58115"/>
    </ligand>
</feature>
<feature type="binding site" evidence="1">
    <location>
        <position position="135"/>
    </location>
    <ligand>
        <name>guanine</name>
        <dbReference type="ChEBI" id="CHEBI:16235"/>
    </ligand>
</feature>
<feature type="binding site" evidence="1">
    <location>
        <position position="135"/>
    </location>
    <ligand>
        <name>xanthine</name>
        <dbReference type="ChEBI" id="CHEBI:17712"/>
    </ligand>
</feature>